<name>HSLV_ECO7I</name>
<dbReference type="EC" id="3.4.25.2" evidence="1"/>
<dbReference type="EMBL" id="CU928164">
    <property type="protein sequence ID" value="CAR19181.1"/>
    <property type="molecule type" value="Genomic_DNA"/>
</dbReference>
<dbReference type="RefSeq" id="WP_000208242.1">
    <property type="nucleotide sequence ID" value="NC_011750.1"/>
</dbReference>
<dbReference type="RefSeq" id="YP_002408992.1">
    <property type="nucleotide sequence ID" value="NC_011750.1"/>
</dbReference>
<dbReference type="SMR" id="B7NU73"/>
<dbReference type="STRING" id="585057.ECIAI39_3062"/>
<dbReference type="MEROPS" id="T01.006"/>
<dbReference type="GeneID" id="93777966"/>
<dbReference type="KEGG" id="ect:ECIAI39_3062"/>
<dbReference type="PATRIC" id="fig|585057.6.peg.3175"/>
<dbReference type="HOGENOM" id="CLU_093872_1_0_6"/>
<dbReference type="Proteomes" id="UP000000749">
    <property type="component" value="Chromosome"/>
</dbReference>
<dbReference type="GO" id="GO:0009376">
    <property type="term" value="C:HslUV protease complex"/>
    <property type="evidence" value="ECO:0007669"/>
    <property type="project" value="UniProtKB-UniRule"/>
</dbReference>
<dbReference type="GO" id="GO:0005839">
    <property type="term" value="C:proteasome core complex"/>
    <property type="evidence" value="ECO:0007669"/>
    <property type="project" value="InterPro"/>
</dbReference>
<dbReference type="GO" id="GO:0046872">
    <property type="term" value="F:metal ion binding"/>
    <property type="evidence" value="ECO:0007669"/>
    <property type="project" value="UniProtKB-KW"/>
</dbReference>
<dbReference type="GO" id="GO:0004298">
    <property type="term" value="F:threonine-type endopeptidase activity"/>
    <property type="evidence" value="ECO:0007669"/>
    <property type="project" value="UniProtKB-KW"/>
</dbReference>
<dbReference type="GO" id="GO:0051603">
    <property type="term" value="P:proteolysis involved in protein catabolic process"/>
    <property type="evidence" value="ECO:0007669"/>
    <property type="project" value="InterPro"/>
</dbReference>
<dbReference type="CDD" id="cd01913">
    <property type="entry name" value="protease_HslV"/>
    <property type="match status" value="1"/>
</dbReference>
<dbReference type="FunFam" id="3.60.20.10:FF:000002">
    <property type="entry name" value="ATP-dependent protease subunit HslV"/>
    <property type="match status" value="1"/>
</dbReference>
<dbReference type="Gene3D" id="3.60.20.10">
    <property type="entry name" value="Glutamine Phosphoribosylpyrophosphate, subunit 1, domain 1"/>
    <property type="match status" value="1"/>
</dbReference>
<dbReference type="HAMAP" id="MF_00248">
    <property type="entry name" value="HslV"/>
    <property type="match status" value="1"/>
</dbReference>
<dbReference type="InterPro" id="IPR022281">
    <property type="entry name" value="ATP-dep_Prtase_HsIV_su"/>
</dbReference>
<dbReference type="InterPro" id="IPR029055">
    <property type="entry name" value="Ntn_hydrolases_N"/>
</dbReference>
<dbReference type="InterPro" id="IPR001353">
    <property type="entry name" value="Proteasome_sua/b"/>
</dbReference>
<dbReference type="InterPro" id="IPR023333">
    <property type="entry name" value="Proteasome_suB-type"/>
</dbReference>
<dbReference type="NCBIfam" id="TIGR03692">
    <property type="entry name" value="ATP_dep_HslV"/>
    <property type="match status" value="1"/>
</dbReference>
<dbReference type="NCBIfam" id="NF003964">
    <property type="entry name" value="PRK05456.1"/>
    <property type="match status" value="1"/>
</dbReference>
<dbReference type="PANTHER" id="PTHR32194:SF0">
    <property type="entry name" value="ATP-DEPENDENT PROTEASE SUBUNIT HSLV"/>
    <property type="match status" value="1"/>
</dbReference>
<dbReference type="PANTHER" id="PTHR32194">
    <property type="entry name" value="METALLOPROTEASE TLDD"/>
    <property type="match status" value="1"/>
</dbReference>
<dbReference type="Pfam" id="PF00227">
    <property type="entry name" value="Proteasome"/>
    <property type="match status" value="1"/>
</dbReference>
<dbReference type="PIRSF" id="PIRSF039093">
    <property type="entry name" value="HslV"/>
    <property type="match status" value="1"/>
</dbReference>
<dbReference type="SUPFAM" id="SSF56235">
    <property type="entry name" value="N-terminal nucleophile aminohydrolases (Ntn hydrolases)"/>
    <property type="match status" value="1"/>
</dbReference>
<dbReference type="PROSITE" id="PS51476">
    <property type="entry name" value="PROTEASOME_BETA_2"/>
    <property type="match status" value="1"/>
</dbReference>
<keyword id="KW-0021">Allosteric enzyme</keyword>
<keyword id="KW-0963">Cytoplasm</keyword>
<keyword id="KW-0378">Hydrolase</keyword>
<keyword id="KW-0479">Metal-binding</keyword>
<keyword id="KW-0645">Protease</keyword>
<keyword id="KW-0915">Sodium</keyword>
<keyword id="KW-0346">Stress response</keyword>
<keyword id="KW-0888">Threonine protease</keyword>
<evidence type="ECO:0000255" key="1">
    <source>
        <dbReference type="HAMAP-Rule" id="MF_00248"/>
    </source>
</evidence>
<protein>
    <recommendedName>
        <fullName evidence="1">ATP-dependent protease subunit HslV</fullName>
        <ecNumber evidence="1">3.4.25.2</ecNumber>
    </recommendedName>
    <alternativeName>
        <fullName evidence="1">Heat shock protein HslV</fullName>
    </alternativeName>
</protein>
<reference key="1">
    <citation type="journal article" date="2009" name="PLoS Genet.">
        <title>Organised genome dynamics in the Escherichia coli species results in highly diverse adaptive paths.</title>
        <authorList>
            <person name="Touchon M."/>
            <person name="Hoede C."/>
            <person name="Tenaillon O."/>
            <person name="Barbe V."/>
            <person name="Baeriswyl S."/>
            <person name="Bidet P."/>
            <person name="Bingen E."/>
            <person name="Bonacorsi S."/>
            <person name="Bouchier C."/>
            <person name="Bouvet O."/>
            <person name="Calteau A."/>
            <person name="Chiapello H."/>
            <person name="Clermont O."/>
            <person name="Cruveiller S."/>
            <person name="Danchin A."/>
            <person name="Diard M."/>
            <person name="Dossat C."/>
            <person name="Karoui M.E."/>
            <person name="Frapy E."/>
            <person name="Garry L."/>
            <person name="Ghigo J.M."/>
            <person name="Gilles A.M."/>
            <person name="Johnson J."/>
            <person name="Le Bouguenec C."/>
            <person name="Lescat M."/>
            <person name="Mangenot S."/>
            <person name="Martinez-Jehanne V."/>
            <person name="Matic I."/>
            <person name="Nassif X."/>
            <person name="Oztas S."/>
            <person name="Petit M.A."/>
            <person name="Pichon C."/>
            <person name="Rouy Z."/>
            <person name="Ruf C.S."/>
            <person name="Schneider D."/>
            <person name="Tourret J."/>
            <person name="Vacherie B."/>
            <person name="Vallenet D."/>
            <person name="Medigue C."/>
            <person name="Rocha E.P.C."/>
            <person name="Denamur E."/>
        </authorList>
    </citation>
    <scope>NUCLEOTIDE SEQUENCE [LARGE SCALE GENOMIC DNA]</scope>
    <source>
        <strain>IAI39 / ExPEC</strain>
    </source>
</reference>
<comment type="function">
    <text evidence="1">Protease subunit of a proteasome-like degradation complex believed to be a general protein degrading machinery.</text>
</comment>
<comment type="catalytic activity">
    <reaction evidence="1">
        <text>ATP-dependent cleavage of peptide bonds with broad specificity.</text>
        <dbReference type="EC" id="3.4.25.2"/>
    </reaction>
</comment>
<comment type="activity regulation">
    <text evidence="1">Allosterically activated by HslU binding.</text>
</comment>
<comment type="subunit">
    <text evidence="1">A double ring-shaped homohexamer of HslV is capped on each side by a ring-shaped HslU homohexamer. The assembly of the HslU/HslV complex is dependent on binding of ATP.</text>
</comment>
<comment type="subcellular location">
    <subcellularLocation>
        <location evidence="1">Cytoplasm</location>
    </subcellularLocation>
</comment>
<comment type="induction">
    <text evidence="1">By heat shock.</text>
</comment>
<comment type="similarity">
    <text evidence="1">Belongs to the peptidase T1B family. HslV subfamily.</text>
</comment>
<gene>
    <name evidence="1" type="primary">hslV</name>
    <name type="ordered locus">ECIAI39_3062</name>
</gene>
<sequence>MTTIVSVRRNGHVVIAGDGQATLGNTVMKGNVKKVRRLYNDKVIAGFAGGTADAFTLFELFERKLEMHQGHLVKAAVELAKDWRTDRMLRKLEALLAVADETASLIITGNGDVVQPENDLIAIGSGGPYAQAAARALLENTELSAREIAEKALDIAGDICIYTNHFHTIEELSYKA</sequence>
<proteinExistence type="inferred from homology"/>
<organism>
    <name type="scientific">Escherichia coli O7:K1 (strain IAI39 / ExPEC)</name>
    <dbReference type="NCBI Taxonomy" id="585057"/>
    <lineage>
        <taxon>Bacteria</taxon>
        <taxon>Pseudomonadati</taxon>
        <taxon>Pseudomonadota</taxon>
        <taxon>Gammaproteobacteria</taxon>
        <taxon>Enterobacterales</taxon>
        <taxon>Enterobacteriaceae</taxon>
        <taxon>Escherichia</taxon>
    </lineage>
</organism>
<feature type="chain" id="PRO_1000192681" description="ATP-dependent protease subunit HslV">
    <location>
        <begin position="1"/>
        <end position="176"/>
    </location>
</feature>
<feature type="active site" evidence="1">
    <location>
        <position position="2"/>
    </location>
</feature>
<feature type="binding site" evidence="1">
    <location>
        <position position="157"/>
    </location>
    <ligand>
        <name>Na(+)</name>
        <dbReference type="ChEBI" id="CHEBI:29101"/>
    </ligand>
</feature>
<feature type="binding site" evidence="1">
    <location>
        <position position="160"/>
    </location>
    <ligand>
        <name>Na(+)</name>
        <dbReference type="ChEBI" id="CHEBI:29101"/>
    </ligand>
</feature>
<feature type="binding site" evidence="1">
    <location>
        <position position="163"/>
    </location>
    <ligand>
        <name>Na(+)</name>
        <dbReference type="ChEBI" id="CHEBI:29101"/>
    </ligand>
</feature>
<accession>B7NU73</accession>